<keyword id="KW-0030">Aminoacyl-tRNA synthetase</keyword>
<keyword id="KW-0067">ATP-binding</keyword>
<keyword id="KW-0963">Cytoplasm</keyword>
<keyword id="KW-0436">Ligase</keyword>
<keyword id="KW-0479">Metal-binding</keyword>
<keyword id="KW-0547">Nucleotide-binding</keyword>
<keyword id="KW-0648">Protein biosynthesis</keyword>
<keyword id="KW-0862">Zinc</keyword>
<sequence length="447" mass="50788">MIKIYDTMTRSLQDFIPLNEGKVNMYVCGPTVYNYIHIGNARSVVAFDTIRRYFEYCGYQVNYISNFTDVDDKIIKGAAEAGMDTKSFSDKFISAFMEDVAALGVKPATKNPRVIDYMDEIIDFVKVLVDKEFAYEANGDVYFRVSKSHHYAKLANKTLEDLEIGASGRVDGEGEIKENPLDFALWKSAKSGEVSWESPWGKGRPGWHIECSVMATEIFGDTIDIHGGGADLEFPHHTNEIAQSEAKTGKTFANYWMHNGFVNVDNEKMSKSLGNFITVHDMLKSVDGQVIRFFLATQQYRKPVNFTEKAVHDAEVNLKYLKNTFNLPIQENANDEELEQFVKAFQGAMDDDFNTANGITVIFEMAKWINSGHYTSRVKETFAELLEIFGIVFQEEVLDADIESLIEQRQEARANRDFATADRIRDELAKQGIKLLDTKDGVRWTRD</sequence>
<organism>
    <name type="scientific">Streptococcus agalactiae serotype Ia (strain ATCC 27591 / A909 / CDC SS700)</name>
    <dbReference type="NCBI Taxonomy" id="205921"/>
    <lineage>
        <taxon>Bacteria</taxon>
        <taxon>Bacillati</taxon>
        <taxon>Bacillota</taxon>
        <taxon>Bacilli</taxon>
        <taxon>Lactobacillales</taxon>
        <taxon>Streptococcaceae</taxon>
        <taxon>Streptococcus</taxon>
    </lineage>
</organism>
<evidence type="ECO:0000255" key="1">
    <source>
        <dbReference type="HAMAP-Rule" id="MF_00041"/>
    </source>
</evidence>
<reference key="1">
    <citation type="journal article" date="2005" name="Proc. Natl. Acad. Sci. U.S.A.">
        <title>Genome analysis of multiple pathogenic isolates of Streptococcus agalactiae: implications for the microbial 'pan-genome'.</title>
        <authorList>
            <person name="Tettelin H."/>
            <person name="Masignani V."/>
            <person name="Cieslewicz M.J."/>
            <person name="Donati C."/>
            <person name="Medini D."/>
            <person name="Ward N.L."/>
            <person name="Angiuoli S.V."/>
            <person name="Crabtree J."/>
            <person name="Jones A.L."/>
            <person name="Durkin A.S."/>
            <person name="DeBoy R.T."/>
            <person name="Davidsen T.M."/>
            <person name="Mora M."/>
            <person name="Scarselli M."/>
            <person name="Margarit y Ros I."/>
            <person name="Peterson J.D."/>
            <person name="Hauser C.R."/>
            <person name="Sundaram J.P."/>
            <person name="Nelson W.C."/>
            <person name="Madupu R."/>
            <person name="Brinkac L.M."/>
            <person name="Dodson R.J."/>
            <person name="Rosovitz M.J."/>
            <person name="Sullivan S.A."/>
            <person name="Daugherty S.C."/>
            <person name="Haft D.H."/>
            <person name="Selengut J."/>
            <person name="Gwinn M.L."/>
            <person name="Zhou L."/>
            <person name="Zafar N."/>
            <person name="Khouri H."/>
            <person name="Radune D."/>
            <person name="Dimitrov G."/>
            <person name="Watkins K."/>
            <person name="O'Connor K.J."/>
            <person name="Smith S."/>
            <person name="Utterback T.R."/>
            <person name="White O."/>
            <person name="Rubens C.E."/>
            <person name="Grandi G."/>
            <person name="Madoff L.C."/>
            <person name="Kasper D.L."/>
            <person name="Telford J.L."/>
            <person name="Wessels M.R."/>
            <person name="Rappuoli R."/>
            <person name="Fraser C.M."/>
        </authorList>
    </citation>
    <scope>NUCLEOTIDE SEQUENCE [LARGE SCALE GENOMIC DNA]</scope>
    <source>
        <strain>ATCC 27591 / A909 / CDC SS700</strain>
    </source>
</reference>
<protein>
    <recommendedName>
        <fullName evidence="1">Cysteine--tRNA ligase</fullName>
        <ecNumber evidence="1">6.1.1.16</ecNumber>
    </recommendedName>
    <alternativeName>
        <fullName evidence="1">Cysteinyl-tRNA synthetase</fullName>
        <shortName evidence="1">CysRS</shortName>
    </alternativeName>
</protein>
<gene>
    <name evidence="1" type="primary">cysS</name>
    <name type="ordered locus">SAK_0270</name>
</gene>
<dbReference type="EC" id="6.1.1.16" evidence="1"/>
<dbReference type="EMBL" id="CP000114">
    <property type="protein sequence ID" value="ABA45206.1"/>
    <property type="molecule type" value="Genomic_DNA"/>
</dbReference>
<dbReference type="RefSeq" id="WP_000591125.1">
    <property type="nucleotide sequence ID" value="NC_007432.1"/>
</dbReference>
<dbReference type="SMR" id="Q3K3G5"/>
<dbReference type="KEGG" id="sak:SAK_0270"/>
<dbReference type="HOGENOM" id="CLU_013528_0_1_9"/>
<dbReference type="GO" id="GO:0005829">
    <property type="term" value="C:cytosol"/>
    <property type="evidence" value="ECO:0007669"/>
    <property type="project" value="TreeGrafter"/>
</dbReference>
<dbReference type="GO" id="GO:0005524">
    <property type="term" value="F:ATP binding"/>
    <property type="evidence" value="ECO:0007669"/>
    <property type="project" value="UniProtKB-UniRule"/>
</dbReference>
<dbReference type="GO" id="GO:0004817">
    <property type="term" value="F:cysteine-tRNA ligase activity"/>
    <property type="evidence" value="ECO:0007669"/>
    <property type="project" value="UniProtKB-UniRule"/>
</dbReference>
<dbReference type="GO" id="GO:0008270">
    <property type="term" value="F:zinc ion binding"/>
    <property type="evidence" value="ECO:0007669"/>
    <property type="project" value="UniProtKB-UniRule"/>
</dbReference>
<dbReference type="GO" id="GO:0006423">
    <property type="term" value="P:cysteinyl-tRNA aminoacylation"/>
    <property type="evidence" value="ECO:0007669"/>
    <property type="project" value="UniProtKB-UniRule"/>
</dbReference>
<dbReference type="CDD" id="cd00672">
    <property type="entry name" value="CysRS_core"/>
    <property type="match status" value="1"/>
</dbReference>
<dbReference type="FunFam" id="3.40.50.620:FF:000130">
    <property type="entry name" value="Cysteine--tRNA ligase"/>
    <property type="match status" value="1"/>
</dbReference>
<dbReference type="Gene3D" id="1.20.120.640">
    <property type="entry name" value="Anticodon-binding domain of a subclass of class I aminoacyl-tRNA synthetases"/>
    <property type="match status" value="1"/>
</dbReference>
<dbReference type="Gene3D" id="3.40.50.620">
    <property type="entry name" value="HUPs"/>
    <property type="match status" value="1"/>
</dbReference>
<dbReference type="HAMAP" id="MF_00041">
    <property type="entry name" value="Cys_tRNA_synth"/>
    <property type="match status" value="1"/>
</dbReference>
<dbReference type="InterPro" id="IPR015803">
    <property type="entry name" value="Cys-tRNA-ligase"/>
</dbReference>
<dbReference type="InterPro" id="IPR015273">
    <property type="entry name" value="Cys-tRNA-synt_Ia_DALR"/>
</dbReference>
<dbReference type="InterPro" id="IPR024909">
    <property type="entry name" value="Cys-tRNA/MSH_ligase"/>
</dbReference>
<dbReference type="InterPro" id="IPR056411">
    <property type="entry name" value="CysS_C"/>
</dbReference>
<dbReference type="InterPro" id="IPR014729">
    <property type="entry name" value="Rossmann-like_a/b/a_fold"/>
</dbReference>
<dbReference type="InterPro" id="IPR032678">
    <property type="entry name" value="tRNA-synt_1_cat_dom"/>
</dbReference>
<dbReference type="InterPro" id="IPR009080">
    <property type="entry name" value="tRNAsynth_Ia_anticodon-bd"/>
</dbReference>
<dbReference type="NCBIfam" id="TIGR00435">
    <property type="entry name" value="cysS"/>
    <property type="match status" value="1"/>
</dbReference>
<dbReference type="PANTHER" id="PTHR10890:SF3">
    <property type="entry name" value="CYSTEINE--TRNA LIGASE, CYTOPLASMIC"/>
    <property type="match status" value="1"/>
</dbReference>
<dbReference type="PANTHER" id="PTHR10890">
    <property type="entry name" value="CYSTEINYL-TRNA SYNTHETASE"/>
    <property type="match status" value="1"/>
</dbReference>
<dbReference type="Pfam" id="PF23493">
    <property type="entry name" value="CysS_C"/>
    <property type="match status" value="1"/>
</dbReference>
<dbReference type="Pfam" id="PF09190">
    <property type="entry name" value="DALR_2"/>
    <property type="match status" value="1"/>
</dbReference>
<dbReference type="Pfam" id="PF01406">
    <property type="entry name" value="tRNA-synt_1e"/>
    <property type="match status" value="1"/>
</dbReference>
<dbReference type="PRINTS" id="PR00983">
    <property type="entry name" value="TRNASYNTHCYS"/>
</dbReference>
<dbReference type="SMART" id="SM00840">
    <property type="entry name" value="DALR_2"/>
    <property type="match status" value="1"/>
</dbReference>
<dbReference type="SUPFAM" id="SSF47323">
    <property type="entry name" value="Anticodon-binding domain of a subclass of class I aminoacyl-tRNA synthetases"/>
    <property type="match status" value="1"/>
</dbReference>
<dbReference type="SUPFAM" id="SSF52374">
    <property type="entry name" value="Nucleotidylyl transferase"/>
    <property type="match status" value="1"/>
</dbReference>
<feature type="chain" id="PRO_0000240962" description="Cysteine--tRNA ligase">
    <location>
        <begin position="1"/>
        <end position="447"/>
    </location>
</feature>
<feature type="short sequence motif" description="'HIGH' region">
    <location>
        <begin position="30"/>
        <end position="40"/>
    </location>
</feature>
<feature type="short sequence motif" description="'KMSKS' region">
    <location>
        <begin position="268"/>
        <end position="272"/>
    </location>
</feature>
<feature type="binding site" evidence="1">
    <location>
        <position position="28"/>
    </location>
    <ligand>
        <name>Zn(2+)</name>
        <dbReference type="ChEBI" id="CHEBI:29105"/>
    </ligand>
</feature>
<feature type="binding site" evidence="1">
    <location>
        <position position="211"/>
    </location>
    <ligand>
        <name>Zn(2+)</name>
        <dbReference type="ChEBI" id="CHEBI:29105"/>
    </ligand>
</feature>
<feature type="binding site" evidence="1">
    <location>
        <position position="236"/>
    </location>
    <ligand>
        <name>Zn(2+)</name>
        <dbReference type="ChEBI" id="CHEBI:29105"/>
    </ligand>
</feature>
<feature type="binding site" evidence="1">
    <location>
        <position position="240"/>
    </location>
    <ligand>
        <name>Zn(2+)</name>
        <dbReference type="ChEBI" id="CHEBI:29105"/>
    </ligand>
</feature>
<feature type="binding site" evidence="1">
    <location>
        <position position="271"/>
    </location>
    <ligand>
        <name>ATP</name>
        <dbReference type="ChEBI" id="CHEBI:30616"/>
    </ligand>
</feature>
<name>SYC_STRA1</name>
<proteinExistence type="inferred from homology"/>
<comment type="catalytic activity">
    <reaction evidence="1">
        <text>tRNA(Cys) + L-cysteine + ATP = L-cysteinyl-tRNA(Cys) + AMP + diphosphate</text>
        <dbReference type="Rhea" id="RHEA:17773"/>
        <dbReference type="Rhea" id="RHEA-COMP:9661"/>
        <dbReference type="Rhea" id="RHEA-COMP:9679"/>
        <dbReference type="ChEBI" id="CHEBI:30616"/>
        <dbReference type="ChEBI" id="CHEBI:33019"/>
        <dbReference type="ChEBI" id="CHEBI:35235"/>
        <dbReference type="ChEBI" id="CHEBI:78442"/>
        <dbReference type="ChEBI" id="CHEBI:78517"/>
        <dbReference type="ChEBI" id="CHEBI:456215"/>
        <dbReference type="EC" id="6.1.1.16"/>
    </reaction>
</comment>
<comment type="cofactor">
    <cofactor evidence="1">
        <name>Zn(2+)</name>
        <dbReference type="ChEBI" id="CHEBI:29105"/>
    </cofactor>
    <text evidence="1">Binds 1 zinc ion per subunit.</text>
</comment>
<comment type="subunit">
    <text evidence="1">Monomer.</text>
</comment>
<comment type="subcellular location">
    <subcellularLocation>
        <location evidence="1">Cytoplasm</location>
    </subcellularLocation>
</comment>
<comment type="similarity">
    <text evidence="1">Belongs to the class-I aminoacyl-tRNA synthetase family.</text>
</comment>
<accession>Q3K3G5</accession>